<protein>
    <recommendedName>
        <fullName>L-lactate dehydrogenase</fullName>
        <shortName>LDH</shortName>
        <ecNumber>1.1.1.27</ecNumber>
    </recommendedName>
</protein>
<evidence type="ECO:0000250" key="1"/>
<evidence type="ECO:0000255" key="2">
    <source>
        <dbReference type="PROSITE-ProRule" id="PRU10002"/>
    </source>
</evidence>
<evidence type="ECO:0000256" key="3">
    <source>
        <dbReference type="SAM" id="MobiDB-lite"/>
    </source>
</evidence>
<evidence type="ECO:0000305" key="4"/>
<feature type="chain" id="PRO_0000168491" description="L-lactate dehydrogenase">
    <location>
        <begin position="1"/>
        <end position="354"/>
    </location>
</feature>
<feature type="region of interest" description="Disordered" evidence="3">
    <location>
        <begin position="302"/>
        <end position="332"/>
    </location>
</feature>
<feature type="active site" description="Proton acceptor" evidence="2">
    <location>
        <position position="214"/>
    </location>
</feature>
<feature type="binding site" evidence="1">
    <location>
        <begin position="73"/>
        <end position="78"/>
    </location>
    <ligand>
        <name>NAD(+)</name>
        <dbReference type="ChEBI" id="CHEBI:57540"/>
    </ligand>
</feature>
<feature type="binding site" evidence="1">
    <location>
        <position position="120"/>
    </location>
    <ligand>
        <name>NAD(+)</name>
        <dbReference type="ChEBI" id="CHEBI:57540"/>
    </ligand>
</feature>
<feature type="binding site" evidence="1">
    <location>
        <position position="127"/>
    </location>
    <ligand>
        <name>substrate</name>
    </ligand>
</feature>
<feature type="binding site" evidence="1">
    <location>
        <position position="159"/>
    </location>
    <ligand>
        <name>NAD(+)</name>
        <dbReference type="ChEBI" id="CHEBI:57540"/>
    </ligand>
</feature>
<feature type="binding site" evidence="1">
    <location>
        <position position="159"/>
    </location>
    <ligand>
        <name>substrate</name>
    </ligand>
</feature>
<feature type="binding site" evidence="1">
    <location>
        <position position="190"/>
    </location>
    <ligand>
        <name>substrate</name>
    </ligand>
</feature>
<feature type="binding site" evidence="1">
    <location>
        <position position="269"/>
    </location>
    <ligand>
        <name>substrate</name>
    </ligand>
</feature>
<sequence>MKKATSLSELGFDAGDASSGFFRPVSGDSSTPTSQHHRRRLTKVSVIGAGNVGMAIAQTILTRDLADEIALVDAVPDKLRGEMLDLQHAAAFLPRTRLVSGTDMSVTRGSDLVIVTAGARQIQGETRLDLLQRNVALFRKIVPPLAEQSHDALLLVVSNPVDVLTYVAWKLSGFPASRVIGSGTNLDSSRFRFLLAEHLDVNAQDVQAYMVGEHGDSSVAVWSSVSVAGMPVLKSLQESHRCFDEEALEGIRRAVVDSAYEVISLKGYTSWAIGYSVASLAASLLRDQRRIHPVSVLARGFHGIPDGTTSSSACPPRRPRRRPGRREMELTEEEAKRLRRSAKTIWENCQLLGL</sequence>
<organism>
    <name type="scientific">Zea mays</name>
    <name type="common">Maize</name>
    <dbReference type="NCBI Taxonomy" id="4577"/>
    <lineage>
        <taxon>Eukaryota</taxon>
        <taxon>Viridiplantae</taxon>
        <taxon>Streptophyta</taxon>
        <taxon>Embryophyta</taxon>
        <taxon>Tracheophyta</taxon>
        <taxon>Spermatophyta</taxon>
        <taxon>Magnoliopsida</taxon>
        <taxon>Liliopsida</taxon>
        <taxon>Poales</taxon>
        <taxon>Poaceae</taxon>
        <taxon>PACMAD clade</taxon>
        <taxon>Panicoideae</taxon>
        <taxon>Andropogonodae</taxon>
        <taxon>Andropogoneae</taxon>
        <taxon>Tripsacinae</taxon>
        <taxon>Zea</taxon>
    </lineage>
</organism>
<name>LDH_MAIZE</name>
<reference key="1">
    <citation type="journal article" date="1992" name="Plant Mol. Biol.">
        <title>Identification and characterization of a hypoxically induced maize lactate dehydrogenase gene.</title>
        <authorList>
            <person name="Good A.G."/>
            <person name="Paetkau D.H."/>
        </authorList>
    </citation>
    <scope>NUCLEOTIDE SEQUENCE [GENOMIC DNA]</scope>
    <source>
        <tissue>Leaf</tissue>
    </source>
</reference>
<proteinExistence type="evidence at transcript level"/>
<comment type="catalytic activity">
    <reaction evidence="2">
        <text>(S)-lactate + NAD(+) = pyruvate + NADH + H(+)</text>
        <dbReference type="Rhea" id="RHEA:23444"/>
        <dbReference type="ChEBI" id="CHEBI:15361"/>
        <dbReference type="ChEBI" id="CHEBI:15378"/>
        <dbReference type="ChEBI" id="CHEBI:16651"/>
        <dbReference type="ChEBI" id="CHEBI:57540"/>
        <dbReference type="ChEBI" id="CHEBI:57945"/>
        <dbReference type="EC" id="1.1.1.27"/>
    </reaction>
</comment>
<comment type="pathway">
    <text>Fermentation; pyruvate fermentation to lactate; (S)-lactate from pyruvate: step 1/1.</text>
</comment>
<comment type="subunit">
    <text>Homotetramer.</text>
</comment>
<comment type="induction">
    <text>By hypoxia.</text>
</comment>
<comment type="similarity">
    <text evidence="4">Belongs to the LDH/MDH superfamily. LDH family.</text>
</comment>
<accession>P29038</accession>
<dbReference type="EC" id="1.1.1.27"/>
<dbReference type="EMBL" id="Z11754">
    <property type="protein sequence ID" value="CAA77808.1"/>
    <property type="molecule type" value="Genomic_DNA"/>
</dbReference>
<dbReference type="PIR" id="S22492">
    <property type="entry name" value="S22492"/>
</dbReference>
<dbReference type="SMR" id="P29038"/>
<dbReference type="STRING" id="4577.P29038"/>
<dbReference type="PaxDb" id="4577-GRMZM2G128929_P01"/>
<dbReference type="MaizeGDB" id="65834"/>
<dbReference type="eggNOG" id="KOG1495">
    <property type="taxonomic scope" value="Eukaryota"/>
</dbReference>
<dbReference type="InParanoid" id="P29038"/>
<dbReference type="UniPathway" id="UPA00554">
    <property type="reaction ID" value="UER00611"/>
</dbReference>
<dbReference type="Proteomes" id="UP000007305">
    <property type="component" value="Unplaced"/>
</dbReference>
<dbReference type="ExpressionAtlas" id="P29038">
    <property type="expression patterns" value="differential"/>
</dbReference>
<dbReference type="GO" id="GO:0005737">
    <property type="term" value="C:cytoplasm"/>
    <property type="evidence" value="ECO:0007669"/>
    <property type="project" value="InterPro"/>
</dbReference>
<dbReference type="GO" id="GO:0004459">
    <property type="term" value="F:L-lactate dehydrogenase activity"/>
    <property type="evidence" value="ECO:0000318"/>
    <property type="project" value="GO_Central"/>
</dbReference>
<dbReference type="GO" id="GO:0006089">
    <property type="term" value="P:lactate metabolic process"/>
    <property type="evidence" value="ECO:0000318"/>
    <property type="project" value="GO_Central"/>
</dbReference>
<dbReference type="GO" id="GO:0006090">
    <property type="term" value="P:pyruvate metabolic process"/>
    <property type="evidence" value="ECO:0000318"/>
    <property type="project" value="GO_Central"/>
</dbReference>
<dbReference type="CDD" id="cd05293">
    <property type="entry name" value="LDH_1"/>
    <property type="match status" value="1"/>
</dbReference>
<dbReference type="FunFam" id="3.40.50.720:FF:000018">
    <property type="entry name" value="Malate dehydrogenase"/>
    <property type="match status" value="1"/>
</dbReference>
<dbReference type="Gene3D" id="3.90.110.10">
    <property type="entry name" value="Lactate dehydrogenase/glycoside hydrolase, family 4, C-terminal"/>
    <property type="match status" value="1"/>
</dbReference>
<dbReference type="Gene3D" id="3.40.50.720">
    <property type="entry name" value="NAD(P)-binding Rossmann-like Domain"/>
    <property type="match status" value="1"/>
</dbReference>
<dbReference type="InterPro" id="IPR001557">
    <property type="entry name" value="L-lactate/malate_DH"/>
</dbReference>
<dbReference type="InterPro" id="IPR011304">
    <property type="entry name" value="L-lactate_DH"/>
</dbReference>
<dbReference type="InterPro" id="IPR018177">
    <property type="entry name" value="L-lactate_DH_AS"/>
</dbReference>
<dbReference type="InterPro" id="IPR022383">
    <property type="entry name" value="Lactate/malate_DH_C"/>
</dbReference>
<dbReference type="InterPro" id="IPR001236">
    <property type="entry name" value="Lactate/malate_DH_N"/>
</dbReference>
<dbReference type="InterPro" id="IPR015955">
    <property type="entry name" value="Lactate_DH/Glyco_Ohase_4_C"/>
</dbReference>
<dbReference type="InterPro" id="IPR036291">
    <property type="entry name" value="NAD(P)-bd_dom_sf"/>
</dbReference>
<dbReference type="NCBIfam" id="TIGR01771">
    <property type="entry name" value="L-LDH-NAD"/>
    <property type="match status" value="1"/>
</dbReference>
<dbReference type="PANTHER" id="PTHR43128">
    <property type="entry name" value="L-2-HYDROXYCARBOXYLATE DEHYDROGENASE (NAD(P)(+))"/>
    <property type="match status" value="1"/>
</dbReference>
<dbReference type="PANTHER" id="PTHR43128:SF16">
    <property type="entry name" value="L-LACTATE DEHYDROGENASE"/>
    <property type="match status" value="1"/>
</dbReference>
<dbReference type="Pfam" id="PF02866">
    <property type="entry name" value="Ldh_1_C"/>
    <property type="match status" value="1"/>
</dbReference>
<dbReference type="Pfam" id="PF00056">
    <property type="entry name" value="Ldh_1_N"/>
    <property type="match status" value="1"/>
</dbReference>
<dbReference type="PIRSF" id="PIRSF000102">
    <property type="entry name" value="Lac_mal_DH"/>
    <property type="match status" value="1"/>
</dbReference>
<dbReference type="PRINTS" id="PR00086">
    <property type="entry name" value="LLDHDRGNASE"/>
</dbReference>
<dbReference type="SUPFAM" id="SSF56327">
    <property type="entry name" value="LDH C-terminal domain-like"/>
    <property type="match status" value="1"/>
</dbReference>
<dbReference type="SUPFAM" id="SSF51735">
    <property type="entry name" value="NAD(P)-binding Rossmann-fold domains"/>
    <property type="match status" value="1"/>
</dbReference>
<dbReference type="PROSITE" id="PS00064">
    <property type="entry name" value="L_LDH"/>
    <property type="match status" value="1"/>
</dbReference>
<keyword id="KW-0520">NAD</keyword>
<keyword id="KW-0560">Oxidoreductase</keyword>
<keyword id="KW-1185">Reference proteome</keyword>
<keyword id="KW-0346">Stress response</keyword>